<feature type="chain" id="PRO_0000051114" description="WD repeat-containing protein PAC11">
    <location>
        <begin position="1"/>
        <end position="533"/>
    </location>
</feature>
<feature type="repeat" description="WD 1">
    <location>
        <begin position="380"/>
        <end position="422"/>
    </location>
</feature>
<feature type="repeat" description="WD 2">
    <location>
        <begin position="432"/>
        <end position="475"/>
    </location>
</feature>
<feature type="region of interest" description="Disordered" evidence="1">
    <location>
        <begin position="1"/>
        <end position="36"/>
    </location>
</feature>
<feature type="compositionally biased region" description="Basic and acidic residues" evidence="1">
    <location>
        <begin position="1"/>
        <end position="19"/>
    </location>
</feature>
<feature type="sequence conflict" description="In Ref. 1; AAB00684." evidence="4" ref="1">
    <original>L</original>
    <variation>V</variation>
    <location>
        <position position="140"/>
    </location>
</feature>
<feature type="strand" evidence="5">
    <location>
        <begin position="76"/>
        <end position="82"/>
    </location>
</feature>
<dbReference type="EMBL" id="U16820">
    <property type="protein sequence ID" value="AAB00684.1"/>
    <property type="molecule type" value="Genomic_DNA"/>
</dbReference>
<dbReference type="EMBL" id="U33050">
    <property type="protein sequence ID" value="AAB64926.1"/>
    <property type="molecule type" value="Genomic_DNA"/>
</dbReference>
<dbReference type="EMBL" id="AY723795">
    <property type="protein sequence ID" value="AAU09712.1"/>
    <property type="molecule type" value="Genomic_DNA"/>
</dbReference>
<dbReference type="EMBL" id="BK006938">
    <property type="protein sequence ID" value="DAA12321.1"/>
    <property type="molecule type" value="Genomic_DNA"/>
</dbReference>
<dbReference type="PIR" id="S69655">
    <property type="entry name" value="S69655"/>
</dbReference>
<dbReference type="RefSeq" id="NP_010776.1">
    <property type="nucleotide sequence ID" value="NM_001180796.1"/>
</dbReference>
<dbReference type="PDB" id="4HT6">
    <property type="method" value="X-ray"/>
    <property type="resolution" value="1.90 A"/>
    <property type="chains" value="B/D/F=75-85"/>
</dbReference>
<dbReference type="PDBsum" id="4HT6"/>
<dbReference type="SMR" id="P40960"/>
<dbReference type="BioGRID" id="32540">
    <property type="interactions" value="280"/>
</dbReference>
<dbReference type="ComplexPortal" id="CPX-1178">
    <property type="entry name" value="Cytoplasmic dynein complex"/>
</dbReference>
<dbReference type="DIP" id="DIP-5268N"/>
<dbReference type="FunCoup" id="P40960">
    <property type="interactions" value="99"/>
</dbReference>
<dbReference type="IntAct" id="P40960">
    <property type="interactions" value="21"/>
</dbReference>
<dbReference type="MINT" id="P40960"/>
<dbReference type="STRING" id="4932.YDR488C"/>
<dbReference type="PaxDb" id="4932-YDR488C"/>
<dbReference type="PeptideAtlas" id="P40960"/>
<dbReference type="EnsemblFungi" id="YDR488C_mRNA">
    <property type="protein sequence ID" value="YDR488C"/>
    <property type="gene ID" value="YDR488C"/>
</dbReference>
<dbReference type="GeneID" id="852099"/>
<dbReference type="KEGG" id="sce:YDR488C"/>
<dbReference type="AGR" id="SGD:S000002896"/>
<dbReference type="SGD" id="S000002896">
    <property type="gene designation" value="PAC11"/>
</dbReference>
<dbReference type="VEuPathDB" id="FungiDB:YDR488C"/>
<dbReference type="eggNOG" id="ENOG502R5J2">
    <property type="taxonomic scope" value="Eukaryota"/>
</dbReference>
<dbReference type="HOGENOM" id="CLU_020687_0_0_1"/>
<dbReference type="InParanoid" id="P40960"/>
<dbReference type="OMA" id="NIMELSC"/>
<dbReference type="OrthoDB" id="366230at2759"/>
<dbReference type="BioCyc" id="YEAST:G3O-30012-MONOMER"/>
<dbReference type="BioGRID-ORCS" id="852099">
    <property type="hits" value="5 hits in 10 CRISPR screens"/>
</dbReference>
<dbReference type="EvolutionaryTrace" id="P40960"/>
<dbReference type="PRO" id="PR:P40960"/>
<dbReference type="Proteomes" id="UP000002311">
    <property type="component" value="Chromosome IV"/>
</dbReference>
<dbReference type="RNAct" id="P40960">
    <property type="molecule type" value="protein"/>
</dbReference>
<dbReference type="GO" id="GO:0005737">
    <property type="term" value="C:cytoplasm"/>
    <property type="evidence" value="ECO:0000303"/>
    <property type="project" value="ComplexPortal"/>
</dbReference>
<dbReference type="GO" id="GO:0005868">
    <property type="term" value="C:cytoplasmic dynein complex"/>
    <property type="evidence" value="ECO:0000353"/>
    <property type="project" value="SGD"/>
</dbReference>
<dbReference type="GO" id="GO:0005881">
    <property type="term" value="C:cytoplasmic microtubule"/>
    <property type="evidence" value="ECO:0000314"/>
    <property type="project" value="SGD"/>
</dbReference>
<dbReference type="GO" id="GO:0045504">
    <property type="term" value="F:dynein heavy chain binding"/>
    <property type="evidence" value="ECO:0000318"/>
    <property type="project" value="GO_Central"/>
</dbReference>
<dbReference type="GO" id="GO:0045503">
    <property type="term" value="F:dynein light chain binding"/>
    <property type="evidence" value="ECO:0000318"/>
    <property type="project" value="GO_Central"/>
</dbReference>
<dbReference type="GO" id="GO:0040001">
    <property type="term" value="P:establishment of mitotic spindle localization"/>
    <property type="evidence" value="ECO:0000315"/>
    <property type="project" value="SGD"/>
</dbReference>
<dbReference type="GO" id="GO:0000132">
    <property type="term" value="P:establishment of mitotic spindle orientation"/>
    <property type="evidence" value="ECO:0000303"/>
    <property type="project" value="ComplexPortal"/>
</dbReference>
<dbReference type="GO" id="GO:0030473">
    <property type="term" value="P:nuclear migration along microtubule"/>
    <property type="evidence" value="ECO:0000315"/>
    <property type="project" value="SGD"/>
</dbReference>
<dbReference type="GO" id="GO:0010970">
    <property type="term" value="P:transport along microtubule"/>
    <property type="evidence" value="ECO:0000318"/>
    <property type="project" value="GO_Central"/>
</dbReference>
<dbReference type="Gene3D" id="2.130.10.10">
    <property type="entry name" value="YVTN repeat-like/Quinoprotein amine dehydrogenase"/>
    <property type="match status" value="1"/>
</dbReference>
<dbReference type="InterPro" id="IPR050687">
    <property type="entry name" value="Dynein_IC"/>
</dbReference>
<dbReference type="InterPro" id="IPR015943">
    <property type="entry name" value="WD40/YVTN_repeat-like_dom_sf"/>
</dbReference>
<dbReference type="InterPro" id="IPR019775">
    <property type="entry name" value="WD40_repeat_CS"/>
</dbReference>
<dbReference type="InterPro" id="IPR036322">
    <property type="entry name" value="WD40_repeat_dom_sf"/>
</dbReference>
<dbReference type="InterPro" id="IPR001680">
    <property type="entry name" value="WD40_rpt"/>
</dbReference>
<dbReference type="PANTHER" id="PTHR12442:SF22">
    <property type="entry name" value="CYTOPLASMIC DYNEIN 1 INTERMEDIATE CHAIN-RELATED"/>
    <property type="match status" value="1"/>
</dbReference>
<dbReference type="PANTHER" id="PTHR12442">
    <property type="entry name" value="DYNEIN INTERMEDIATE CHAIN"/>
    <property type="match status" value="1"/>
</dbReference>
<dbReference type="SUPFAM" id="SSF50978">
    <property type="entry name" value="WD40 repeat-like"/>
    <property type="match status" value="1"/>
</dbReference>
<dbReference type="PROSITE" id="PS00678">
    <property type="entry name" value="WD_REPEATS_1"/>
    <property type="match status" value="1"/>
</dbReference>
<dbReference type="PROSITE" id="PS50082">
    <property type="entry name" value="WD_REPEATS_2"/>
    <property type="match status" value="1"/>
</dbReference>
<dbReference type="PROSITE" id="PS50294">
    <property type="entry name" value="WD_REPEATS_REGION"/>
    <property type="match status" value="1"/>
</dbReference>
<reference key="1">
    <citation type="submission" date="1994-11" db="EMBL/GenBank/DDBJ databases">
        <title>Redundant pathways of mitotic motor function revealed by synthetic-lethal-with-cin8 mutants.</title>
        <authorList>
            <person name="Hoyt M.A."/>
        </authorList>
    </citation>
    <scope>NUCLEOTIDE SEQUENCE [GENOMIC DNA]</scope>
    <source>
        <strain>ATCC 204508 / S288c</strain>
    </source>
</reference>
<reference key="2">
    <citation type="journal article" date="1997" name="Nature">
        <title>The nucleotide sequence of Saccharomyces cerevisiae chromosome IV.</title>
        <authorList>
            <person name="Jacq C."/>
            <person name="Alt-Moerbe J."/>
            <person name="Andre B."/>
            <person name="Arnold W."/>
            <person name="Bahr A."/>
            <person name="Ballesta J.P.G."/>
            <person name="Bargues M."/>
            <person name="Baron L."/>
            <person name="Becker A."/>
            <person name="Biteau N."/>
            <person name="Bloecker H."/>
            <person name="Blugeon C."/>
            <person name="Boskovic J."/>
            <person name="Brandt P."/>
            <person name="Brueckner M."/>
            <person name="Buitrago M.J."/>
            <person name="Coster F."/>
            <person name="Delaveau T."/>
            <person name="del Rey F."/>
            <person name="Dujon B."/>
            <person name="Eide L.G."/>
            <person name="Garcia-Cantalejo J.M."/>
            <person name="Goffeau A."/>
            <person name="Gomez-Peris A."/>
            <person name="Granotier C."/>
            <person name="Hanemann V."/>
            <person name="Hankeln T."/>
            <person name="Hoheisel J.D."/>
            <person name="Jaeger W."/>
            <person name="Jimenez A."/>
            <person name="Jonniaux J.-L."/>
            <person name="Kraemer C."/>
            <person name="Kuester H."/>
            <person name="Laamanen P."/>
            <person name="Legros Y."/>
            <person name="Louis E.J."/>
            <person name="Moeller-Rieker S."/>
            <person name="Monnet A."/>
            <person name="Moro M."/>
            <person name="Mueller-Auer S."/>
            <person name="Nussbaumer B."/>
            <person name="Paricio N."/>
            <person name="Paulin L."/>
            <person name="Perea J."/>
            <person name="Perez-Alonso M."/>
            <person name="Perez-Ortin J.E."/>
            <person name="Pohl T.M."/>
            <person name="Prydz H."/>
            <person name="Purnelle B."/>
            <person name="Rasmussen S.W."/>
            <person name="Remacha M.A."/>
            <person name="Revuelta J.L."/>
            <person name="Rieger M."/>
            <person name="Salom D."/>
            <person name="Saluz H.P."/>
            <person name="Saiz J.E."/>
            <person name="Saren A.-M."/>
            <person name="Schaefer M."/>
            <person name="Scharfe M."/>
            <person name="Schmidt E.R."/>
            <person name="Schneider C."/>
            <person name="Scholler P."/>
            <person name="Schwarz S."/>
            <person name="Soler-Mira A."/>
            <person name="Urrestarazu L.A."/>
            <person name="Verhasselt P."/>
            <person name="Vissers S."/>
            <person name="Voet M."/>
            <person name="Volckaert G."/>
            <person name="Wagner G."/>
            <person name="Wambutt R."/>
            <person name="Wedler E."/>
            <person name="Wedler H."/>
            <person name="Woelfl S."/>
            <person name="Harris D.E."/>
            <person name="Bowman S."/>
            <person name="Brown D."/>
            <person name="Churcher C.M."/>
            <person name="Connor R."/>
            <person name="Dedman K."/>
            <person name="Gentles S."/>
            <person name="Hamlin N."/>
            <person name="Hunt S."/>
            <person name="Jones L."/>
            <person name="McDonald S."/>
            <person name="Murphy L.D."/>
            <person name="Niblett D."/>
            <person name="Odell C."/>
            <person name="Oliver K."/>
            <person name="Rajandream M.A."/>
            <person name="Richards C."/>
            <person name="Shore L."/>
            <person name="Walsh S.V."/>
            <person name="Barrell B.G."/>
            <person name="Dietrich F.S."/>
            <person name="Mulligan J.T."/>
            <person name="Allen E."/>
            <person name="Araujo R."/>
            <person name="Aviles E."/>
            <person name="Berno A."/>
            <person name="Carpenter J."/>
            <person name="Chen E."/>
            <person name="Cherry J.M."/>
            <person name="Chung E."/>
            <person name="Duncan M."/>
            <person name="Hunicke-Smith S."/>
            <person name="Hyman R.W."/>
            <person name="Komp C."/>
            <person name="Lashkari D."/>
            <person name="Lew H."/>
            <person name="Lin D."/>
            <person name="Mosedale D."/>
            <person name="Nakahara K."/>
            <person name="Namath A."/>
            <person name="Oefner P."/>
            <person name="Oh C."/>
            <person name="Petel F.X."/>
            <person name="Roberts D."/>
            <person name="Schramm S."/>
            <person name="Schroeder M."/>
            <person name="Shogren T."/>
            <person name="Shroff N."/>
            <person name="Winant A."/>
            <person name="Yelton M.A."/>
            <person name="Botstein D."/>
            <person name="Davis R.W."/>
            <person name="Johnston M."/>
            <person name="Andrews S."/>
            <person name="Brinkman R."/>
            <person name="Cooper J."/>
            <person name="Ding H."/>
            <person name="Du Z."/>
            <person name="Favello A."/>
            <person name="Fulton L."/>
            <person name="Gattung S."/>
            <person name="Greco T."/>
            <person name="Hallsworth K."/>
            <person name="Hawkins J."/>
            <person name="Hillier L.W."/>
            <person name="Jier M."/>
            <person name="Johnson D."/>
            <person name="Johnston L."/>
            <person name="Kirsten J."/>
            <person name="Kucaba T."/>
            <person name="Langston Y."/>
            <person name="Latreille P."/>
            <person name="Le T."/>
            <person name="Mardis E."/>
            <person name="Menezes S."/>
            <person name="Miller N."/>
            <person name="Nhan M."/>
            <person name="Pauley A."/>
            <person name="Peluso D."/>
            <person name="Rifkin L."/>
            <person name="Riles L."/>
            <person name="Taich A."/>
            <person name="Trevaskis E."/>
            <person name="Vignati D."/>
            <person name="Wilcox L."/>
            <person name="Wohldman P."/>
            <person name="Vaudin M."/>
            <person name="Wilson R."/>
            <person name="Waterston R."/>
            <person name="Albermann K."/>
            <person name="Hani J."/>
            <person name="Heumann K."/>
            <person name="Kleine K."/>
            <person name="Mewes H.-W."/>
            <person name="Zollner A."/>
            <person name="Zaccaria P."/>
        </authorList>
    </citation>
    <scope>NUCLEOTIDE SEQUENCE [LARGE SCALE GENOMIC DNA]</scope>
    <source>
        <strain>ATCC 204508 / S288c</strain>
    </source>
</reference>
<reference key="3">
    <citation type="journal article" date="2014" name="G3 (Bethesda)">
        <title>The reference genome sequence of Saccharomyces cerevisiae: Then and now.</title>
        <authorList>
            <person name="Engel S.R."/>
            <person name="Dietrich F.S."/>
            <person name="Fisk D.G."/>
            <person name="Binkley G."/>
            <person name="Balakrishnan R."/>
            <person name="Costanzo M.C."/>
            <person name="Dwight S.S."/>
            <person name="Hitz B.C."/>
            <person name="Karra K."/>
            <person name="Nash R.S."/>
            <person name="Weng S."/>
            <person name="Wong E.D."/>
            <person name="Lloyd P."/>
            <person name="Skrzypek M.S."/>
            <person name="Miyasato S.R."/>
            <person name="Simison M."/>
            <person name="Cherry J.M."/>
        </authorList>
    </citation>
    <scope>GENOME REANNOTATION</scope>
    <source>
        <strain>ATCC 204508 / S288c</strain>
    </source>
</reference>
<reference key="4">
    <citation type="journal article" date="2007" name="Genome Res.">
        <title>Approaching a complete repository of sequence-verified protein-encoding clones for Saccharomyces cerevisiae.</title>
        <authorList>
            <person name="Hu Y."/>
            <person name="Rolfs A."/>
            <person name="Bhullar B."/>
            <person name="Murthy T.V.S."/>
            <person name="Zhu C."/>
            <person name="Berger M.F."/>
            <person name="Camargo A.A."/>
            <person name="Kelley F."/>
            <person name="McCarron S."/>
            <person name="Jepson D."/>
            <person name="Richardson A."/>
            <person name="Raphael J."/>
            <person name="Moreira D."/>
            <person name="Taycher E."/>
            <person name="Zuo D."/>
            <person name="Mohr S."/>
            <person name="Kane M.F."/>
            <person name="Williamson J."/>
            <person name="Simpson A.J.G."/>
            <person name="Bulyk M.L."/>
            <person name="Harlow E."/>
            <person name="Marsischky G."/>
            <person name="Kolodner R.D."/>
            <person name="LaBaer J."/>
        </authorList>
    </citation>
    <scope>NUCLEOTIDE SEQUENCE [GENOMIC DNA]</scope>
    <source>
        <strain>ATCC 204508 / S288c</strain>
    </source>
</reference>
<reference key="5">
    <citation type="journal article" date="2003" name="Nature">
        <title>Global analysis of protein expression in yeast.</title>
        <authorList>
            <person name="Ghaemmaghami S."/>
            <person name="Huh W.-K."/>
            <person name="Bower K."/>
            <person name="Howson R.W."/>
            <person name="Belle A."/>
            <person name="Dephoure N."/>
            <person name="O'Shea E.K."/>
            <person name="Weissman J.S."/>
        </authorList>
    </citation>
    <scope>LEVEL OF PROTEIN EXPRESSION [LARGE SCALE ANALYSIS]</scope>
</reference>
<reference key="6">
    <citation type="journal article" date="2001" name="J. Cell Biol.">
        <title>Cortical Num1p interacts with the dynein intermediate chain Pac11p and cytoplasmic microtubules in budding yeast.</title>
        <authorList>
            <person name="Farkasovsky M."/>
            <person name="Kuentzel H."/>
        </authorList>
    </citation>
    <scope>INTERACTION WITH NUM1</scope>
</reference>
<proteinExistence type="evidence at protein level"/>
<sequence length="533" mass="60074">MERLKQLEEKRRQLKELRERRKQASLFPGSETMGHHPTEVHAKATMVSVSVQTDMEEGSKIQEPQSAYLRRKEVITYDKGIQTDQIEEEQLQENENHTTTDAVAIETTAADENNKDKAENDQPRLELAKPFLVEEAAATLSNASFARLETEVSASGQQAPSNMQQDKDNLMQWNMVSENLQSETDCDCIAQEYDPGKGVLVVVYLRLPPADLQYASSEAAWSVVNVVKCDNASGRNGLLIDMVEFRGTRIMTATILRRYHPESNVISILLATLTGKIILYELRLKQKKPETPVVYVVQRNMVARHYFQHPVVAVIETSSVQDQERVLVAADNGNIMELSCLDLTVLRKPQQLRPVPLSQLLSLENDTCTYTERLQRLAKFDEVGIACMAYTSEDPQYVWIGGEDGGIYKVFWDQPGPLYLSLDNNGFQPAENHSTRVTGLEFHWDDARRLMLLLSCSTDWTVRLWDARAGKAIIGAPLLLGGPVLRARWLEKNNGGENSRTLRCQVWCADGRLVVVNWAFDAKTSLYTATVIS</sequence>
<protein>
    <recommendedName>
        <fullName>WD repeat-containing protein PAC11</fullName>
    </recommendedName>
</protein>
<organism>
    <name type="scientific">Saccharomyces cerevisiae (strain ATCC 204508 / S288c)</name>
    <name type="common">Baker's yeast</name>
    <dbReference type="NCBI Taxonomy" id="559292"/>
    <lineage>
        <taxon>Eukaryota</taxon>
        <taxon>Fungi</taxon>
        <taxon>Dikarya</taxon>
        <taxon>Ascomycota</taxon>
        <taxon>Saccharomycotina</taxon>
        <taxon>Saccharomycetes</taxon>
        <taxon>Saccharomycetales</taxon>
        <taxon>Saccharomycetaceae</taxon>
        <taxon>Saccharomyces</taxon>
    </lineage>
</organism>
<keyword id="KW-0002">3D-structure</keyword>
<keyword id="KW-0963">Cytoplasm</keyword>
<keyword id="KW-0206">Cytoskeleton</keyword>
<keyword id="KW-0493">Microtubule</keyword>
<keyword id="KW-1185">Reference proteome</keyword>
<keyword id="KW-0677">Repeat</keyword>
<keyword id="KW-0853">WD repeat</keyword>
<gene>
    <name type="primary">PAC11</name>
    <name type="ordered locus">YDR488C</name>
</gene>
<evidence type="ECO:0000256" key="1">
    <source>
        <dbReference type="SAM" id="MobiDB-lite"/>
    </source>
</evidence>
<evidence type="ECO:0000269" key="2">
    <source>
    </source>
</evidence>
<evidence type="ECO:0000269" key="3">
    <source>
    </source>
</evidence>
<evidence type="ECO:0000305" key="4"/>
<evidence type="ECO:0007829" key="5">
    <source>
        <dbReference type="PDB" id="4HT6"/>
    </source>
</evidence>
<name>PAC11_YEAST</name>
<accession>P40960</accession>
<accession>D6VTB1</accession>
<accession>Q03398</accession>
<comment type="function">
    <text>Required for viability in the absence of the kinesin-related CIN8 mitotic motor. May be a dynein intermediate chain.</text>
</comment>
<comment type="subunit">
    <text evidence="2">Interacts with NUM1, when DYN1 is present.</text>
</comment>
<comment type="interaction">
    <interactant intactId="EBI-30551">
        <id>P40960</id>
    </interactant>
    <interactant intactId="EBI-6230">
        <id>P36022</id>
        <label>DYN1</label>
    </interactant>
    <organismsDiffer>false</organismsDiffer>
    <experiments>3</experiments>
</comment>
<comment type="interaction">
    <interactant intactId="EBI-30551">
        <id>P40960</id>
    </interactant>
    <interactant intactId="EBI-6240">
        <id>Q02647</id>
        <label>DYN2</label>
    </interactant>
    <organismsDiffer>false</organismsDiffer>
    <experiments>4</experiments>
</comment>
<comment type="subcellular location">
    <subcellularLocation>
        <location evidence="4">Cytoplasm</location>
        <location evidence="4">Cytoskeleton</location>
    </subcellularLocation>
</comment>
<comment type="miscellaneous">
    <text evidence="3">Present with 752 molecules/cell in log phase SD medium.</text>
</comment>